<protein>
    <recommendedName>
        <fullName evidence="3">Aquaporin-2</fullName>
        <shortName>AQP-2</shortName>
    </recommendedName>
    <alternativeName>
        <fullName>ADH water channel</fullName>
    </alternativeName>
    <alternativeName>
        <fullName>Aquaporin-CD</fullName>
        <shortName>AQP-CD</shortName>
    </alternativeName>
    <alternativeName>
        <fullName>Collecting duct water channel protein</fullName>
    </alternativeName>
    <alternativeName>
        <fullName>WCH-CD</fullName>
    </alternativeName>
    <alternativeName>
        <fullName>Water channel protein for renal collecting duct</fullName>
    </alternativeName>
</protein>
<comment type="function">
    <text evidence="2">Forms a water-specific channel that provides the plasma membranes of renal collecting duct with high permeability to water, thereby permitting water to move in the direction of an osmotic gradient. Plays an essential role in renal water homeostasis. Could also be permeable to glycerol.</text>
</comment>
<comment type="catalytic activity">
    <reaction evidence="2">
        <text>H2O(in) = H2O(out)</text>
        <dbReference type="Rhea" id="RHEA:29667"/>
        <dbReference type="ChEBI" id="CHEBI:15377"/>
    </reaction>
</comment>
<comment type="catalytic activity">
    <reaction evidence="2">
        <text>glycerol(in) = glycerol(out)</text>
        <dbReference type="Rhea" id="RHEA:29675"/>
        <dbReference type="ChEBI" id="CHEBI:17754"/>
    </reaction>
</comment>
<comment type="subunit">
    <text evidence="2">Homotetramer.</text>
</comment>
<comment type="subcellular location">
    <subcellularLocation>
        <location evidence="2">Apical cell membrane</location>
        <topology evidence="2">Multi-pass membrane protein</topology>
    </subcellularLocation>
    <subcellularLocation>
        <location evidence="1">Basolateral cell membrane</location>
        <topology evidence="2">Multi-pass membrane protein</topology>
    </subcellularLocation>
    <subcellularLocation>
        <location evidence="2">Cell membrane</location>
        <topology evidence="2">Multi-pass membrane protein</topology>
    </subcellularLocation>
    <subcellularLocation>
        <location evidence="2">Cytoplasmic vesicle membrane</location>
        <topology evidence="2">Multi-pass membrane protein</topology>
    </subcellularLocation>
    <subcellularLocation>
        <location evidence="2">Golgi apparatus</location>
        <location evidence="2">trans-Golgi network membrane</location>
        <topology evidence="2">Multi-pass membrane protein</topology>
    </subcellularLocation>
    <text evidence="2">Shuttles from vesicles to the apical membrane. Vasopressin-regulated phosphorylation is required for translocation to the apical cell membrane. PLEKHA8/FAPP2 is required to transport AQP2 from the TGN to sites where AQP2 is phosphorylated.</text>
</comment>
<comment type="domain">
    <text evidence="2">Aquaporins contain two tandem repeats each containing three membrane-spanning domains and a pore-forming loop with the signature motif Asn-Pro-Ala (NPA).</text>
</comment>
<comment type="PTM">
    <text evidence="2">Serine phosphorylation is necessary and sufficient for expression at the apical membrane. Endocytosis is not phosphorylation-dependent.</text>
</comment>
<comment type="PTM">
    <text evidence="2">N-glycosylated.</text>
</comment>
<comment type="similarity">
    <text evidence="4">Belongs to the MIP/aquaporin (TC 1.A.8) family.</text>
</comment>
<accession>P79803</accession>
<feature type="chain" id="PRO_0000063935" description="Aquaporin-2">
    <location>
        <begin position="1" status="less than"/>
        <end position="111" status="greater than"/>
    </location>
</feature>
<feature type="topological domain" description="Cytoplasmic" evidence="4">
    <location>
        <begin position="1" status="less than"/>
        <end position="6"/>
    </location>
</feature>
<feature type="transmembrane region" description="Helical" evidence="2">
    <location>
        <begin position="7"/>
        <end position="27"/>
    </location>
</feature>
<feature type="topological domain" description="Extracellular" evidence="4">
    <location>
        <begin position="28"/>
        <end position="37"/>
    </location>
</feature>
<feature type="transmembrane region" description="Helical" evidence="2">
    <location>
        <begin position="38"/>
        <end position="56"/>
    </location>
</feature>
<feature type="topological domain" description="Cytoplasmic" evidence="4">
    <location>
        <begin position="57"/>
        <end position="61"/>
    </location>
</feature>
<feature type="intramembrane region" description="Discontinuously helical" evidence="2">
    <location>
        <begin position="62"/>
        <end position="71"/>
    </location>
</feature>
<feature type="topological domain" description="Cytoplasmic" evidence="4">
    <location>
        <begin position="72"/>
        <end position="82"/>
    </location>
</feature>
<feature type="transmembrane region" description="Helical" evidence="2">
    <location>
        <begin position="83"/>
        <end position="104"/>
    </location>
</feature>
<feature type="topological domain" description="Extracellular" evidence="4">
    <location>
        <begin position="105"/>
        <end position="111" status="greater than"/>
    </location>
</feature>
<feature type="short sequence motif" description="NPA 1" evidence="2">
    <location>
        <begin position="65"/>
        <end position="67"/>
    </location>
</feature>
<feature type="non-terminal residue">
    <location>
        <position position="1"/>
    </location>
</feature>
<feature type="non-terminal residue">
    <location>
        <position position="111"/>
    </location>
</feature>
<proteinExistence type="inferred from homology"/>
<organism>
    <name type="scientific">Macroscelides proboscideus</name>
    <name type="common">Short-eared elephant shrew</name>
    <dbReference type="NCBI Taxonomy" id="29082"/>
    <lineage>
        <taxon>Eukaryota</taxon>
        <taxon>Metazoa</taxon>
        <taxon>Chordata</taxon>
        <taxon>Craniata</taxon>
        <taxon>Vertebrata</taxon>
        <taxon>Euteleostomi</taxon>
        <taxon>Mammalia</taxon>
        <taxon>Eutheria</taxon>
        <taxon>Afrotheria</taxon>
        <taxon>Macroscelidea</taxon>
        <taxon>Macroscelididae</taxon>
        <taxon>Macroscelides</taxon>
    </lineage>
</organism>
<name>AQP2_MACPR</name>
<gene>
    <name evidence="2" type="primary">AQP2</name>
</gene>
<reference key="1">
    <citation type="journal article" date="1997" name="Mol. Biol. Evol.">
        <title>Molecular evolution of mammalian aquaporin-2: further evidence that elephant shrew and aardvark join the paenungulate clade.</title>
        <authorList>
            <person name="Madsen O.J."/>
            <person name="Deen P.M.T."/>
            <person name="Pesole G."/>
            <person name="Saccone C."/>
            <person name="de Jong W.W."/>
        </authorList>
    </citation>
    <scope>NUCLEOTIDE SEQUENCE [GENOMIC DNA]</scope>
</reference>
<dbReference type="EMBL" id="Y10630">
    <property type="protein sequence ID" value="CAA71655.1"/>
    <property type="molecule type" value="Genomic_DNA"/>
</dbReference>
<dbReference type="SMR" id="P79803"/>
<dbReference type="GO" id="GO:0016324">
    <property type="term" value="C:apical plasma membrane"/>
    <property type="evidence" value="ECO:0000250"/>
    <property type="project" value="UniProtKB"/>
</dbReference>
<dbReference type="GO" id="GO:0016323">
    <property type="term" value="C:basolateral plasma membrane"/>
    <property type="evidence" value="ECO:0007669"/>
    <property type="project" value="UniProtKB-SubCell"/>
</dbReference>
<dbReference type="GO" id="GO:0030659">
    <property type="term" value="C:cytoplasmic vesicle membrane"/>
    <property type="evidence" value="ECO:0007669"/>
    <property type="project" value="UniProtKB-SubCell"/>
</dbReference>
<dbReference type="GO" id="GO:0005794">
    <property type="term" value="C:Golgi apparatus"/>
    <property type="evidence" value="ECO:0007669"/>
    <property type="project" value="UniProtKB-SubCell"/>
</dbReference>
<dbReference type="GO" id="GO:0005886">
    <property type="term" value="C:plasma membrane"/>
    <property type="evidence" value="ECO:0000250"/>
    <property type="project" value="UniProtKB"/>
</dbReference>
<dbReference type="GO" id="GO:0015250">
    <property type="term" value="F:water channel activity"/>
    <property type="evidence" value="ECO:0000250"/>
    <property type="project" value="UniProtKB"/>
</dbReference>
<dbReference type="GO" id="GO:0051289">
    <property type="term" value="P:protein homotetramerization"/>
    <property type="evidence" value="ECO:0000250"/>
    <property type="project" value="UniProtKB"/>
</dbReference>
<dbReference type="GO" id="GO:0006833">
    <property type="term" value="P:water transport"/>
    <property type="evidence" value="ECO:0000250"/>
    <property type="project" value="UniProtKB"/>
</dbReference>
<dbReference type="FunFam" id="1.20.1080.10:FF:000032">
    <property type="entry name" value="Aquaporin-2"/>
    <property type="match status" value="1"/>
</dbReference>
<dbReference type="Gene3D" id="1.20.1080.10">
    <property type="entry name" value="Glycerol uptake facilitator protein"/>
    <property type="match status" value="1"/>
</dbReference>
<dbReference type="InterPro" id="IPR023271">
    <property type="entry name" value="Aquaporin-like"/>
</dbReference>
<dbReference type="InterPro" id="IPR034294">
    <property type="entry name" value="Aquaporin_transptr"/>
</dbReference>
<dbReference type="InterPro" id="IPR000425">
    <property type="entry name" value="MIP"/>
</dbReference>
<dbReference type="InterPro" id="IPR022357">
    <property type="entry name" value="MIP_CS"/>
</dbReference>
<dbReference type="PANTHER" id="PTHR19139">
    <property type="entry name" value="AQUAPORIN TRANSPORTER"/>
    <property type="match status" value="1"/>
</dbReference>
<dbReference type="PANTHER" id="PTHR19139:SF45">
    <property type="entry name" value="AQUAPORIN-2"/>
    <property type="match status" value="1"/>
</dbReference>
<dbReference type="Pfam" id="PF00230">
    <property type="entry name" value="MIP"/>
    <property type="match status" value="1"/>
</dbReference>
<dbReference type="PRINTS" id="PR00783">
    <property type="entry name" value="MINTRINSICP"/>
</dbReference>
<dbReference type="SUPFAM" id="SSF81338">
    <property type="entry name" value="Aquaporin-like"/>
    <property type="match status" value="1"/>
</dbReference>
<dbReference type="PROSITE" id="PS00221">
    <property type="entry name" value="MIP"/>
    <property type="match status" value="1"/>
</dbReference>
<evidence type="ECO:0000250" key="1">
    <source>
        <dbReference type="UniProtKB" id="P34080"/>
    </source>
</evidence>
<evidence type="ECO:0000250" key="2">
    <source>
        <dbReference type="UniProtKB" id="P41181"/>
    </source>
</evidence>
<evidence type="ECO:0000303" key="3">
    <source>
    </source>
</evidence>
<evidence type="ECO:0000305" key="4"/>
<sequence length="111" mass="11553">SIAFSRAVFSEFLATLLFVFFGLGSALNWPSTVPIPTVLQISMAFGLAIGTLVQTLGHISGAHINPAVTVACLVGCHVSFLRATFYVAAQLLGAVAGAALLHKLTPEDIRG</sequence>
<keyword id="KW-1003">Cell membrane</keyword>
<keyword id="KW-0968">Cytoplasmic vesicle</keyword>
<keyword id="KW-0325">Glycoprotein</keyword>
<keyword id="KW-0333">Golgi apparatus</keyword>
<keyword id="KW-0472">Membrane</keyword>
<keyword id="KW-0597">Phosphoprotein</keyword>
<keyword id="KW-0812">Transmembrane</keyword>
<keyword id="KW-1133">Transmembrane helix</keyword>
<keyword id="KW-0813">Transport</keyword>